<name>HSLV_CHLL2</name>
<accession>B3ECB1</accession>
<gene>
    <name evidence="1" type="primary">hslV</name>
    <name type="ordered locus">Clim_1117</name>
</gene>
<feature type="chain" id="PRO_1000100884" description="ATP-dependent protease subunit HslV">
    <location>
        <begin position="1"/>
        <end position="182"/>
    </location>
</feature>
<feature type="active site" evidence="1">
    <location>
        <position position="12"/>
    </location>
</feature>
<feature type="binding site" evidence="1">
    <location>
        <position position="167"/>
    </location>
    <ligand>
        <name>Na(+)</name>
        <dbReference type="ChEBI" id="CHEBI:29101"/>
    </ligand>
</feature>
<feature type="binding site" evidence="1">
    <location>
        <position position="170"/>
    </location>
    <ligand>
        <name>Na(+)</name>
        <dbReference type="ChEBI" id="CHEBI:29101"/>
    </ligand>
</feature>
<feature type="binding site" evidence="1">
    <location>
        <position position="173"/>
    </location>
    <ligand>
        <name>Na(+)</name>
        <dbReference type="ChEBI" id="CHEBI:29101"/>
    </ligand>
</feature>
<sequence>MGQESKPLIRSTTVLGVIRDGKAALGSDGQMTLGNTVLKHSTRKIRSLYHGRIITGFAGATADAVTLLDRFEEKLDAYGGKLERAAVELARDWRTDKYLRRLEAMLAVVSQDKALIISGTGDVIEPEDSIVAIGSGSMYALAAARSLLKHTPLSAREIVSESLKIAADICIYTNDHIVIEEL</sequence>
<organism>
    <name type="scientific">Chlorobium limicola (strain DSM 245 / NBRC 103803 / 6330)</name>
    <dbReference type="NCBI Taxonomy" id="290315"/>
    <lineage>
        <taxon>Bacteria</taxon>
        <taxon>Pseudomonadati</taxon>
        <taxon>Chlorobiota</taxon>
        <taxon>Chlorobiia</taxon>
        <taxon>Chlorobiales</taxon>
        <taxon>Chlorobiaceae</taxon>
        <taxon>Chlorobium/Pelodictyon group</taxon>
        <taxon>Chlorobium</taxon>
    </lineage>
</organism>
<keyword id="KW-0021">Allosteric enzyme</keyword>
<keyword id="KW-0963">Cytoplasm</keyword>
<keyword id="KW-0378">Hydrolase</keyword>
<keyword id="KW-0479">Metal-binding</keyword>
<keyword id="KW-0645">Protease</keyword>
<keyword id="KW-0915">Sodium</keyword>
<keyword id="KW-0888">Threonine protease</keyword>
<evidence type="ECO:0000255" key="1">
    <source>
        <dbReference type="HAMAP-Rule" id="MF_00248"/>
    </source>
</evidence>
<dbReference type="EC" id="3.4.25.2" evidence="1"/>
<dbReference type="EMBL" id="CP001097">
    <property type="protein sequence ID" value="ACD90186.1"/>
    <property type="molecule type" value="Genomic_DNA"/>
</dbReference>
<dbReference type="RefSeq" id="WP_012466063.1">
    <property type="nucleotide sequence ID" value="NC_010803.1"/>
</dbReference>
<dbReference type="SMR" id="B3ECB1"/>
<dbReference type="STRING" id="290315.Clim_1117"/>
<dbReference type="KEGG" id="cli:Clim_1117"/>
<dbReference type="eggNOG" id="COG5405">
    <property type="taxonomic scope" value="Bacteria"/>
</dbReference>
<dbReference type="HOGENOM" id="CLU_093872_1_0_10"/>
<dbReference type="OrthoDB" id="9804884at2"/>
<dbReference type="Proteomes" id="UP000008841">
    <property type="component" value="Chromosome"/>
</dbReference>
<dbReference type="GO" id="GO:0009376">
    <property type="term" value="C:HslUV protease complex"/>
    <property type="evidence" value="ECO:0007669"/>
    <property type="project" value="UniProtKB-UniRule"/>
</dbReference>
<dbReference type="GO" id="GO:0005839">
    <property type="term" value="C:proteasome core complex"/>
    <property type="evidence" value="ECO:0007669"/>
    <property type="project" value="InterPro"/>
</dbReference>
<dbReference type="GO" id="GO:0046872">
    <property type="term" value="F:metal ion binding"/>
    <property type="evidence" value="ECO:0007669"/>
    <property type="project" value="UniProtKB-KW"/>
</dbReference>
<dbReference type="GO" id="GO:0004298">
    <property type="term" value="F:threonine-type endopeptidase activity"/>
    <property type="evidence" value="ECO:0007669"/>
    <property type="project" value="UniProtKB-KW"/>
</dbReference>
<dbReference type="GO" id="GO:0051603">
    <property type="term" value="P:proteolysis involved in protein catabolic process"/>
    <property type="evidence" value="ECO:0007669"/>
    <property type="project" value="InterPro"/>
</dbReference>
<dbReference type="CDD" id="cd01913">
    <property type="entry name" value="protease_HslV"/>
    <property type="match status" value="1"/>
</dbReference>
<dbReference type="Gene3D" id="3.60.20.10">
    <property type="entry name" value="Glutamine Phosphoribosylpyrophosphate, subunit 1, domain 1"/>
    <property type="match status" value="1"/>
</dbReference>
<dbReference type="HAMAP" id="MF_00248">
    <property type="entry name" value="HslV"/>
    <property type="match status" value="1"/>
</dbReference>
<dbReference type="InterPro" id="IPR022281">
    <property type="entry name" value="ATP-dep_Prtase_HsIV_su"/>
</dbReference>
<dbReference type="InterPro" id="IPR029055">
    <property type="entry name" value="Ntn_hydrolases_N"/>
</dbReference>
<dbReference type="InterPro" id="IPR001353">
    <property type="entry name" value="Proteasome_sua/b"/>
</dbReference>
<dbReference type="InterPro" id="IPR023333">
    <property type="entry name" value="Proteasome_suB-type"/>
</dbReference>
<dbReference type="NCBIfam" id="TIGR03692">
    <property type="entry name" value="ATP_dep_HslV"/>
    <property type="match status" value="1"/>
</dbReference>
<dbReference type="NCBIfam" id="NF003964">
    <property type="entry name" value="PRK05456.1"/>
    <property type="match status" value="1"/>
</dbReference>
<dbReference type="PANTHER" id="PTHR32194:SF0">
    <property type="entry name" value="ATP-DEPENDENT PROTEASE SUBUNIT HSLV"/>
    <property type="match status" value="1"/>
</dbReference>
<dbReference type="PANTHER" id="PTHR32194">
    <property type="entry name" value="METALLOPROTEASE TLDD"/>
    <property type="match status" value="1"/>
</dbReference>
<dbReference type="Pfam" id="PF00227">
    <property type="entry name" value="Proteasome"/>
    <property type="match status" value="1"/>
</dbReference>
<dbReference type="PIRSF" id="PIRSF039093">
    <property type="entry name" value="HslV"/>
    <property type="match status" value="1"/>
</dbReference>
<dbReference type="SUPFAM" id="SSF56235">
    <property type="entry name" value="N-terminal nucleophile aminohydrolases (Ntn hydrolases)"/>
    <property type="match status" value="1"/>
</dbReference>
<dbReference type="PROSITE" id="PS51476">
    <property type="entry name" value="PROTEASOME_BETA_2"/>
    <property type="match status" value="1"/>
</dbReference>
<protein>
    <recommendedName>
        <fullName evidence="1">ATP-dependent protease subunit HslV</fullName>
        <ecNumber evidence="1">3.4.25.2</ecNumber>
    </recommendedName>
</protein>
<comment type="function">
    <text evidence="1">Protease subunit of a proteasome-like degradation complex believed to be a general protein degrading machinery.</text>
</comment>
<comment type="catalytic activity">
    <reaction evidence="1">
        <text>ATP-dependent cleavage of peptide bonds with broad specificity.</text>
        <dbReference type="EC" id="3.4.25.2"/>
    </reaction>
</comment>
<comment type="activity regulation">
    <text evidence="1">Allosterically activated by HslU binding.</text>
</comment>
<comment type="subunit">
    <text evidence="1">A double ring-shaped homohexamer of HslV is capped on each side by a ring-shaped HslU homohexamer. The assembly of the HslU/HslV complex is dependent on binding of ATP.</text>
</comment>
<comment type="subcellular location">
    <subcellularLocation>
        <location evidence="1">Cytoplasm</location>
    </subcellularLocation>
</comment>
<comment type="similarity">
    <text evidence="1">Belongs to the peptidase T1B family. HslV subfamily.</text>
</comment>
<reference key="1">
    <citation type="submission" date="2008-05" db="EMBL/GenBank/DDBJ databases">
        <title>Complete sequence of Chlorobium limicola DSM 245.</title>
        <authorList>
            <consortium name="US DOE Joint Genome Institute"/>
            <person name="Lucas S."/>
            <person name="Copeland A."/>
            <person name="Lapidus A."/>
            <person name="Glavina del Rio T."/>
            <person name="Dalin E."/>
            <person name="Tice H."/>
            <person name="Bruce D."/>
            <person name="Goodwin L."/>
            <person name="Pitluck S."/>
            <person name="Schmutz J."/>
            <person name="Larimer F."/>
            <person name="Land M."/>
            <person name="Hauser L."/>
            <person name="Kyrpides N."/>
            <person name="Ovchinnikova G."/>
            <person name="Zhao F."/>
            <person name="Li T."/>
            <person name="Liu Z."/>
            <person name="Overmann J."/>
            <person name="Bryant D.A."/>
            <person name="Richardson P."/>
        </authorList>
    </citation>
    <scope>NUCLEOTIDE SEQUENCE [LARGE SCALE GENOMIC DNA]</scope>
    <source>
        <strain>DSM 245 / NBRC 103803 / 6330</strain>
    </source>
</reference>
<proteinExistence type="inferred from homology"/>